<sequence length="83" mass="9111">MQNDAGEFVDLYVPRKCSASNRIIGAKDHASIQMNVAEVDKVTGRFNGQFKTYAICGAIRRMGESDDSILRLAKADGIVSKNF</sequence>
<proteinExistence type="evidence at protein level"/>
<feature type="chain" id="PRO_0000240298" description="Small ribosomal subunit protein eS21">
    <location>
        <begin position="1"/>
        <end position="83"/>
    </location>
</feature>
<feature type="modified residue" description="N-acetylmethionine" evidence="1">
    <location>
        <position position="1"/>
    </location>
</feature>
<feature type="modified residue" description="N6-acetyllysine" evidence="1">
    <location>
        <position position="81"/>
    </location>
</feature>
<feature type="cross-link" description="Glycyl lysine isopeptide (Lys-Gly) (interchain with G-Cter in SUMO2)" evidence="1">
    <location>
        <position position="41"/>
    </location>
</feature>
<feature type="turn" evidence="4">
    <location>
        <begin position="18"/>
        <end position="20"/>
    </location>
</feature>
<feature type="strand" evidence="4">
    <location>
        <begin position="35"/>
        <end position="39"/>
    </location>
</feature>
<feature type="strand" evidence="4">
    <location>
        <begin position="41"/>
        <end position="43"/>
    </location>
</feature>
<feature type="strand" evidence="4">
    <location>
        <begin position="46"/>
        <end position="52"/>
    </location>
</feature>
<feature type="helix" evidence="4">
    <location>
        <begin position="57"/>
        <end position="61"/>
    </location>
</feature>
<feature type="helix" evidence="4">
    <location>
        <begin position="66"/>
        <end position="74"/>
    </location>
</feature>
<feature type="turn" evidence="4">
    <location>
        <begin position="75"/>
        <end position="77"/>
    </location>
</feature>
<protein>
    <recommendedName>
        <fullName evidence="3">Small ribosomal subunit protein eS21</fullName>
    </recommendedName>
    <alternativeName>
        <fullName>40S ribosomal protein S21</fullName>
    </alternativeName>
</protein>
<accession>Q32PB8</accession>
<organism>
    <name type="scientific">Bos taurus</name>
    <name type="common">Bovine</name>
    <dbReference type="NCBI Taxonomy" id="9913"/>
    <lineage>
        <taxon>Eukaryota</taxon>
        <taxon>Metazoa</taxon>
        <taxon>Chordata</taxon>
        <taxon>Craniata</taxon>
        <taxon>Vertebrata</taxon>
        <taxon>Euteleostomi</taxon>
        <taxon>Mammalia</taxon>
        <taxon>Eutheria</taxon>
        <taxon>Laurasiatheria</taxon>
        <taxon>Artiodactyla</taxon>
        <taxon>Ruminantia</taxon>
        <taxon>Pecora</taxon>
        <taxon>Bovidae</taxon>
        <taxon>Bovinae</taxon>
        <taxon>Bos</taxon>
    </lineage>
</organism>
<dbReference type="EMBL" id="BC108180">
    <property type="protein sequence ID" value="AAI08181.1"/>
    <property type="molecule type" value="mRNA"/>
</dbReference>
<dbReference type="RefSeq" id="NP_001035671.1">
    <property type="nucleotide sequence ID" value="NM_001040581.2"/>
</dbReference>
<dbReference type="RefSeq" id="XP_005214907.1">
    <property type="nucleotide sequence ID" value="XM_005214850.3"/>
</dbReference>
<dbReference type="RefSeq" id="XP_010809831.1">
    <property type="nucleotide sequence ID" value="XM_010811529.2"/>
</dbReference>
<dbReference type="PDB" id="6MTD">
    <property type="method" value="EM"/>
    <property type="resolution" value="3.30 A"/>
    <property type="chains" value="VV=1-83"/>
</dbReference>
<dbReference type="PDB" id="6MTE">
    <property type="method" value="EM"/>
    <property type="resolution" value="3.40 A"/>
    <property type="chains" value="VV=1-83"/>
</dbReference>
<dbReference type="PDB" id="7NWG">
    <property type="method" value="EM"/>
    <property type="resolution" value="3.80 A"/>
    <property type="chains" value="W2=1-83"/>
</dbReference>
<dbReference type="PDB" id="7NWH">
    <property type="method" value="EM"/>
    <property type="resolution" value="4.10 A"/>
    <property type="chains" value="VV=1-83"/>
</dbReference>
<dbReference type="PDB" id="7OYD">
    <property type="method" value="EM"/>
    <property type="resolution" value="2.30 A"/>
    <property type="chains" value="VV=1-83"/>
</dbReference>
<dbReference type="PDB" id="8P03">
    <property type="method" value="EM"/>
    <property type="resolution" value="3.04 A"/>
    <property type="chains" value="X=1-83"/>
</dbReference>
<dbReference type="PDB" id="8P09">
    <property type="method" value="EM"/>
    <property type="resolution" value="3.30 A"/>
    <property type="chains" value="X=1-83"/>
</dbReference>
<dbReference type="PDBsum" id="6MTD"/>
<dbReference type="PDBsum" id="6MTE"/>
<dbReference type="PDBsum" id="7NWG"/>
<dbReference type="PDBsum" id="7NWH"/>
<dbReference type="PDBsum" id="7OYD"/>
<dbReference type="PDBsum" id="8P03"/>
<dbReference type="PDBsum" id="8P09"/>
<dbReference type="EMDB" id="EMD-12631"/>
<dbReference type="EMDB" id="EMD-12632"/>
<dbReference type="EMDB" id="EMD-13114"/>
<dbReference type="EMDB" id="EMD-17329"/>
<dbReference type="EMDB" id="EMD-17330"/>
<dbReference type="EMDB" id="EMD-9240"/>
<dbReference type="EMDB" id="EMD-9242"/>
<dbReference type="SMR" id="Q32PB8"/>
<dbReference type="FunCoup" id="Q32PB8">
    <property type="interactions" value="2151"/>
</dbReference>
<dbReference type="STRING" id="9913.ENSBTAP00000027713"/>
<dbReference type="PaxDb" id="9913-ENSBTAP00000027713"/>
<dbReference type="PeptideAtlas" id="Q32PB8"/>
<dbReference type="GeneID" id="615178"/>
<dbReference type="KEGG" id="bta:615178"/>
<dbReference type="CTD" id="6227"/>
<dbReference type="VEuPathDB" id="HostDB:ENSBTAG00000020795"/>
<dbReference type="eggNOG" id="KOG3486">
    <property type="taxonomic scope" value="Eukaryota"/>
</dbReference>
<dbReference type="HOGENOM" id="CLU_167122_2_0_1"/>
<dbReference type="InParanoid" id="Q32PB8"/>
<dbReference type="OMA" id="GESDACM"/>
<dbReference type="OrthoDB" id="278325at2759"/>
<dbReference type="TreeFam" id="TF300167"/>
<dbReference type="Reactome" id="R-BTA-156827">
    <property type="pathway name" value="L13a-mediated translational silencing of Ceruloplasmin expression"/>
</dbReference>
<dbReference type="Reactome" id="R-BTA-1799339">
    <property type="pathway name" value="SRP-dependent cotranslational protein targeting to membrane"/>
</dbReference>
<dbReference type="Reactome" id="R-BTA-6791226">
    <property type="pathway name" value="Major pathway of rRNA processing in the nucleolus and cytosol"/>
</dbReference>
<dbReference type="Reactome" id="R-BTA-72649">
    <property type="pathway name" value="Translation initiation complex formation"/>
</dbReference>
<dbReference type="Reactome" id="R-BTA-72689">
    <property type="pathway name" value="Formation of a pool of free 40S subunits"/>
</dbReference>
<dbReference type="Reactome" id="R-BTA-72695">
    <property type="pathway name" value="Formation of the ternary complex, and subsequently, the 43S complex"/>
</dbReference>
<dbReference type="Reactome" id="R-BTA-72702">
    <property type="pathway name" value="Ribosomal scanning and start codon recognition"/>
</dbReference>
<dbReference type="Reactome" id="R-BTA-72706">
    <property type="pathway name" value="GTP hydrolysis and joining of the 60S ribosomal subunit"/>
</dbReference>
<dbReference type="Reactome" id="R-BTA-975956">
    <property type="pathway name" value="Nonsense Mediated Decay (NMD) independent of the Exon Junction Complex (EJC)"/>
</dbReference>
<dbReference type="Reactome" id="R-BTA-975957">
    <property type="pathway name" value="Nonsense Mediated Decay (NMD) enhanced by the Exon Junction Complex (EJC)"/>
</dbReference>
<dbReference type="Proteomes" id="UP000009136">
    <property type="component" value="Chromosome 13"/>
</dbReference>
<dbReference type="Bgee" id="ENSBTAG00000020795">
    <property type="expression patterns" value="Expressed in ileocecal valve and 109 other cell types or tissues"/>
</dbReference>
<dbReference type="GO" id="GO:0022627">
    <property type="term" value="C:cytosolic small ribosomal subunit"/>
    <property type="evidence" value="ECO:0000250"/>
    <property type="project" value="UniProtKB"/>
</dbReference>
<dbReference type="GO" id="GO:0005791">
    <property type="term" value="C:rough endoplasmic reticulum"/>
    <property type="evidence" value="ECO:0007669"/>
    <property type="project" value="UniProtKB-SubCell"/>
</dbReference>
<dbReference type="GO" id="GO:0045202">
    <property type="term" value="C:synapse"/>
    <property type="evidence" value="ECO:0007669"/>
    <property type="project" value="Ensembl"/>
</dbReference>
<dbReference type="GO" id="GO:0003735">
    <property type="term" value="F:structural constituent of ribosome"/>
    <property type="evidence" value="ECO:0000318"/>
    <property type="project" value="GO_Central"/>
</dbReference>
<dbReference type="GO" id="GO:0002181">
    <property type="term" value="P:cytoplasmic translation"/>
    <property type="evidence" value="ECO:0000250"/>
    <property type="project" value="UniProtKB"/>
</dbReference>
<dbReference type="GO" id="GO:0000447">
    <property type="term" value="P:endonucleolytic cleavage in ITS1 to separate SSU-rRNA from 5.8S rRNA and LSU-rRNA from tricistronic rRNA transcript (SSU-rRNA, 5.8S rRNA, LSU-rRNA)"/>
    <property type="evidence" value="ECO:0000318"/>
    <property type="project" value="GO_Central"/>
</dbReference>
<dbReference type="GO" id="GO:0000461">
    <property type="term" value="P:endonucleolytic cleavage to generate mature 3'-end of SSU-rRNA from (SSU-rRNA, 5.8S rRNA, LSU-rRNA)"/>
    <property type="evidence" value="ECO:0000318"/>
    <property type="project" value="GO_Central"/>
</dbReference>
<dbReference type="FunFam" id="3.30.1230.20:FF:000001">
    <property type="entry name" value="40S ribosomal protein S21"/>
    <property type="match status" value="1"/>
</dbReference>
<dbReference type="Gene3D" id="3.30.1230.20">
    <property type="match status" value="1"/>
</dbReference>
<dbReference type="InterPro" id="IPR001931">
    <property type="entry name" value="Ribosomal_eS21"/>
</dbReference>
<dbReference type="InterPro" id="IPR018279">
    <property type="entry name" value="Ribosomal_eS21_CS"/>
</dbReference>
<dbReference type="InterPro" id="IPR038579">
    <property type="entry name" value="Ribosomal_eS21_sf"/>
</dbReference>
<dbReference type="PANTHER" id="PTHR10442">
    <property type="entry name" value="40S RIBOSOMAL PROTEIN S21"/>
    <property type="match status" value="1"/>
</dbReference>
<dbReference type="Pfam" id="PF01249">
    <property type="entry name" value="Ribosomal_S21e"/>
    <property type="match status" value="1"/>
</dbReference>
<dbReference type="PIRSF" id="PIRSF002148">
    <property type="entry name" value="Ribosomal_S21e"/>
    <property type="match status" value="1"/>
</dbReference>
<dbReference type="PROSITE" id="PS00996">
    <property type="entry name" value="RIBOSOMAL_S21E"/>
    <property type="match status" value="1"/>
</dbReference>
<name>RS21_BOVIN</name>
<evidence type="ECO:0000250" key="1">
    <source>
        <dbReference type="UniProtKB" id="P63220"/>
    </source>
</evidence>
<evidence type="ECO:0000250" key="2">
    <source>
        <dbReference type="UniProtKB" id="P63221"/>
    </source>
</evidence>
<evidence type="ECO:0000305" key="3"/>
<evidence type="ECO:0007829" key="4">
    <source>
        <dbReference type="PDB" id="8P03"/>
    </source>
</evidence>
<reference key="1">
    <citation type="submission" date="2005-10" db="EMBL/GenBank/DDBJ databases">
        <authorList>
            <consortium name="NIH - Mammalian Gene Collection (MGC) project"/>
        </authorList>
    </citation>
    <scope>NUCLEOTIDE SEQUENCE [LARGE SCALE MRNA]</scope>
    <source>
        <strain>Crossbred X Angus</strain>
        <tissue>Liver</tissue>
    </source>
</reference>
<comment type="function">
    <text evidence="1">Component of the small ribosomal subunit. The ribosome is a large ribonucleoprotein complex responsible for the synthesis of proteins in the cell.</text>
</comment>
<comment type="subunit">
    <text evidence="1">Component of the 40S small ribosomal subunit.</text>
</comment>
<comment type="subcellular location">
    <subcellularLocation>
        <location evidence="1">Cytoplasm</location>
        <location evidence="1">Cytosol</location>
    </subcellularLocation>
    <subcellularLocation>
        <location evidence="1">Cytoplasm</location>
    </subcellularLocation>
    <subcellularLocation>
        <location evidence="2">Rough endoplasmic reticulum</location>
    </subcellularLocation>
    <text evidence="1 2">Detected on cytosolic polysomes (By similarity). Detected in ribosomes that are associated with the rough endoplasmic reticulum (By similarity).</text>
</comment>
<comment type="similarity">
    <text evidence="3">Belongs to the eukaryotic ribosomal protein eS21 family.</text>
</comment>
<gene>
    <name type="primary">RPS21</name>
</gene>
<keyword id="KW-0002">3D-structure</keyword>
<keyword id="KW-0007">Acetylation</keyword>
<keyword id="KW-0963">Cytoplasm</keyword>
<keyword id="KW-0256">Endoplasmic reticulum</keyword>
<keyword id="KW-1017">Isopeptide bond</keyword>
<keyword id="KW-1185">Reference proteome</keyword>
<keyword id="KW-0687">Ribonucleoprotein</keyword>
<keyword id="KW-0689">Ribosomal protein</keyword>
<keyword id="KW-0832">Ubl conjugation</keyword>